<keyword id="KW-0903">Direct protein sequencing</keyword>
<proteinExistence type="evidence at protein level"/>
<organism>
    <name type="scientific">Daucus carota</name>
    <name type="common">Wild carrot</name>
    <dbReference type="NCBI Taxonomy" id="4039"/>
    <lineage>
        <taxon>Eukaryota</taxon>
        <taxon>Viridiplantae</taxon>
        <taxon>Streptophyta</taxon>
        <taxon>Embryophyta</taxon>
        <taxon>Tracheophyta</taxon>
        <taxon>Spermatophyta</taxon>
        <taxon>Magnoliopsida</taxon>
        <taxon>eudicotyledons</taxon>
        <taxon>Gunneridae</taxon>
        <taxon>Pentapetalae</taxon>
        <taxon>asterids</taxon>
        <taxon>campanulids</taxon>
        <taxon>Apiales</taxon>
        <taxon>Apiaceae</taxon>
        <taxon>Apioideae</taxon>
        <taxon>Scandiceae</taxon>
        <taxon>Daucinae</taxon>
        <taxon>Daucus</taxon>
        <taxon>Daucus sect. Daucus</taxon>
    </lineage>
</organism>
<accession>P86068</accession>
<name>UP05_DAUCA</name>
<sequence>TSSGCPNFESLVR</sequence>
<protein>
    <recommendedName>
        <fullName>Unknown protein 5</fullName>
    </recommendedName>
</protein>
<evidence type="ECO:0000305" key="1"/>
<feature type="chain" id="PRO_0000355611" description="Unknown protein 5">
    <location>
        <begin position="1" status="less than"/>
        <end position="13" status="greater than"/>
    </location>
</feature>
<feature type="unsure residue" description="F or M">
    <location>
        <position position="8"/>
    </location>
</feature>
<feature type="unsure residue" description="L or I">
    <location>
        <position position="11"/>
    </location>
</feature>
<feature type="non-terminal residue">
    <location>
        <position position="1"/>
    </location>
</feature>
<feature type="non-terminal residue">
    <location>
        <position position="13"/>
    </location>
</feature>
<reference evidence="1" key="1">
    <citation type="submission" date="2008-07" db="UniProtKB">
        <authorList>
            <person name="Gomez Ros L.V."/>
            <person name="Almagro L."/>
            <person name="Ros Barcelo A."/>
            <person name="Pedreno M.A."/>
        </authorList>
    </citation>
    <scope>PROTEIN SEQUENCE</scope>
</reference>